<protein>
    <recommendedName>
        <fullName evidence="15">Z-DNA-binding protein 1</fullName>
    </recommendedName>
    <alternativeName>
        <fullName evidence="17">DNA-dependent activator of IFN-regulatory factors</fullName>
        <shortName evidence="17">DAI</shortName>
    </alternativeName>
    <alternativeName>
        <fullName evidence="12">Tumor stroma and activated macrophage protein DLM-1</fullName>
    </alternativeName>
</protein>
<feature type="chain" id="PRO_0000066564" description="Z-DNA-binding protein 1">
    <location>
        <begin position="1"/>
        <end position="429"/>
    </location>
</feature>
<feature type="domain" description="Z-binding 1" evidence="2">
    <location>
        <begin position="8"/>
        <end position="70"/>
    </location>
</feature>
<feature type="domain" description="Z-binding 2" evidence="2">
    <location>
        <begin position="103"/>
        <end position="166"/>
    </location>
</feature>
<feature type="region of interest" description="Disordered" evidence="3">
    <location>
        <begin position="68"/>
        <end position="107"/>
    </location>
</feature>
<feature type="region of interest" description="Disordered" evidence="3">
    <location>
        <begin position="277"/>
        <end position="299"/>
    </location>
</feature>
<feature type="region of interest" description="Disordered" evidence="3">
    <location>
        <begin position="339"/>
        <end position="429"/>
    </location>
</feature>
<feature type="short sequence motif" description="RIP homotypic interaction motif (RHIM) 1" evidence="1">
    <location>
        <begin position="195"/>
        <end position="219"/>
    </location>
</feature>
<feature type="short sequence motif" description="RIP homotypic interaction motif (RHIM) 2" evidence="1">
    <location>
        <begin position="253"/>
        <end position="277"/>
    </location>
</feature>
<feature type="compositionally biased region" description="Gly residues" evidence="3">
    <location>
        <begin position="347"/>
        <end position="358"/>
    </location>
</feature>
<feature type="compositionally biased region" description="Basic and acidic residues" evidence="3">
    <location>
        <begin position="407"/>
        <end position="420"/>
    </location>
</feature>
<feature type="splice variant" id="VSP_046081" description="In isoform 7." evidence="13">
    <location>
        <begin position="12"/>
        <end position="86"/>
    </location>
</feature>
<feature type="splice variant" id="VSP_004079" description="In isoform 5." evidence="14">
    <original>AERPQQHAATIPETPGPQFSQQREEDIYRFLKDNGPQRALVIAQALGMRTAKDVNRDLYRMKS</original>
    <variation>GNCHPGEAGLTLQGASWQWTSTDLSLGSNLNSATWELTGFLSLCLGFFFWLMELTAGLLGRGC</variation>
    <location>
        <begin position="87"/>
        <end position="149"/>
    </location>
</feature>
<feature type="splice variant" id="VSP_004078" description="In isoform 4." evidence="19">
    <location>
        <begin position="87"/>
        <end position="109"/>
    </location>
</feature>
<feature type="splice variant" id="VSP_004080" description="In isoform 5." evidence="14">
    <location>
        <begin position="150"/>
        <end position="429"/>
    </location>
</feature>
<feature type="splice variant" id="VSP_045405" description="In isoform 6." evidence="18">
    <original>SAGPRHLPSMAPGDSSTWGTLVDP</original>
    <variation>KSPKRAQGGDLGGEPPDPLGGGKG</variation>
    <location>
        <begin position="225"/>
        <end position="248"/>
    </location>
</feature>
<feature type="splice variant" id="VSP_045406" description="In isoform 6." evidence="18">
    <location>
        <begin position="249"/>
        <end position="429"/>
    </location>
</feature>
<feature type="splice variant" id="VSP_004081" description="In isoform 2." evidence="19">
    <original>GRRPADTQSRSHFPRDIGQPITPSHSKLTPKLETMTLGNRSHKAAEGSHYVDEASHEGSWWGGGI</original>
    <variation>VAAFTEVLNPSKSFMKFGINFFQTPVNVDSLTSSHESQMFLTACRLVIFSRRFSTYFAQIHLRNHSVLHLCPHKIYLLKNKK</variation>
    <location>
        <begin position="365"/>
        <end position="429"/>
    </location>
</feature>
<feature type="splice variant" id="VSP_004082" description="In isoform 3." evidence="19">
    <original>GRRPADTQSRSHFPRDIGQPITPSHSKLTPKLETMTLGNRSHKAAEGSHYVDEASHEGSWWGGGI</original>
    <variation>GRRPADTQSRSFDGQE</variation>
    <location>
        <begin position="365"/>
        <end position="429"/>
    </location>
</feature>
<feature type="sequence variant" id="VAR_057030" description="In dbSNP:rs35813125.">
    <original>R</original>
    <variation>I</variation>
    <location>
        <position position="17"/>
    </location>
</feature>
<feature type="sequence variant" id="VAR_061728" description="In dbSNP:rs35895307.">
    <original>K</original>
    <variation>R</variation>
    <location>
        <position position="53"/>
    </location>
</feature>
<feature type="sequence variant" id="VAR_057031" description="In dbSNP:rs34964609.">
    <original>G</original>
    <variation>R</variation>
    <location>
        <position position="70"/>
    </location>
</feature>
<feature type="sequence variant" id="VAR_014316" description="In dbSNP:rs2073145." evidence="4 10">
    <original>E</original>
    <variation>K</variation>
    <location>
        <position position="88"/>
    </location>
</feature>
<feature type="sequence variant" id="VAR_057032" description="In dbSNP:rs16981187.">
    <original>D</original>
    <variation>H</variation>
    <location>
        <position position="154"/>
    </location>
</feature>
<feature type="sequence variant" id="VAR_057033" description="In dbSNP:rs34478944.">
    <original>R</original>
    <variation>H</variation>
    <location>
        <position position="166"/>
    </location>
</feature>
<feature type="sequence variant" id="VAR_069138" description="In dbSNP:rs2865394." evidence="4 5 11">
    <original>Q</original>
    <variation>R</variation>
    <location>
        <position position="258"/>
    </location>
</feature>
<feature type="sequence variant" id="VAR_061729" description="In dbSNP:rs41275648.">
    <original>A</original>
    <variation>V</variation>
    <location>
        <position position="332"/>
    </location>
</feature>
<feature type="helix" evidence="25">
    <location>
        <begin position="10"/>
        <end position="25"/>
    </location>
</feature>
<feature type="helix" evidence="25">
    <location>
        <begin position="31"/>
        <end position="38"/>
    </location>
</feature>
<feature type="helix" evidence="25">
    <location>
        <begin position="42"/>
        <end position="54"/>
    </location>
</feature>
<feature type="strand" evidence="25">
    <location>
        <begin position="57"/>
        <end position="62"/>
    </location>
</feature>
<feature type="strand" evidence="25">
    <location>
        <begin position="65"/>
        <end position="72"/>
    </location>
</feature>
<feature type="helix" evidence="26">
    <location>
        <begin position="108"/>
        <end position="120"/>
    </location>
</feature>
<feature type="strand" evidence="26">
    <location>
        <begin position="122"/>
        <end position="124"/>
    </location>
</feature>
<feature type="helix" evidence="26">
    <location>
        <begin position="125"/>
        <end position="131"/>
    </location>
</feature>
<feature type="helix" evidence="26">
    <location>
        <begin position="137"/>
        <end position="139"/>
    </location>
</feature>
<feature type="helix" evidence="26">
    <location>
        <begin position="141"/>
        <end position="149"/>
    </location>
</feature>
<feature type="strand" evidence="26">
    <location>
        <begin position="152"/>
        <end position="155"/>
    </location>
</feature>
<feature type="turn" evidence="26">
    <location>
        <begin position="157"/>
        <end position="159"/>
    </location>
</feature>
<feature type="strand" evidence="26">
    <location>
        <begin position="161"/>
        <end position="164"/>
    </location>
</feature>
<keyword id="KW-0002">3D-structure</keyword>
<keyword id="KW-0025">Alternative splicing</keyword>
<keyword id="KW-0051">Antiviral defense</keyword>
<keyword id="KW-0053">Apoptosis</keyword>
<keyword id="KW-0963">Cytoplasm</keyword>
<keyword id="KW-0238">DNA-binding</keyword>
<keyword id="KW-0945">Host-virus interaction</keyword>
<keyword id="KW-0391">Immunity</keyword>
<keyword id="KW-0399">Innate immunity</keyword>
<keyword id="KW-1210">Necrosis</keyword>
<keyword id="KW-0539">Nucleus</keyword>
<keyword id="KW-1267">Proteomics identification</keyword>
<keyword id="KW-1185">Reference proteome</keyword>
<keyword id="KW-0677">Repeat</keyword>
<keyword id="KW-0694">RNA-binding</keyword>
<name>ZBP1_HUMAN</name>
<accession>Q9H171</accession>
<accession>A2A2F7</accession>
<accession>B3KVA1</accession>
<accession>F5GYT1</accession>
<accession>Q5JY39</accession>
<accession>Q9BYW4</accession>
<organism>
    <name type="scientific">Homo sapiens</name>
    <name type="common">Human</name>
    <dbReference type="NCBI Taxonomy" id="9606"/>
    <lineage>
        <taxon>Eukaryota</taxon>
        <taxon>Metazoa</taxon>
        <taxon>Chordata</taxon>
        <taxon>Craniata</taxon>
        <taxon>Vertebrata</taxon>
        <taxon>Euteleostomi</taxon>
        <taxon>Mammalia</taxon>
        <taxon>Eutheria</taxon>
        <taxon>Euarchontoglires</taxon>
        <taxon>Primates</taxon>
        <taxon>Haplorrhini</taxon>
        <taxon>Catarrhini</taxon>
        <taxon>Hominidae</taxon>
        <taxon>Homo</taxon>
    </lineage>
</organism>
<proteinExistence type="evidence at protein level"/>
<dbReference type="EMBL" id="AJ300575">
    <property type="protein sequence ID" value="CAC18810.1"/>
    <property type="molecule type" value="mRNA"/>
</dbReference>
<dbReference type="EMBL" id="CT002036">
    <property type="status" value="NOT_ANNOTATED_CDS"/>
    <property type="molecule type" value="mRNA"/>
</dbReference>
<dbReference type="EMBL" id="AK122761">
    <property type="protein sequence ID" value="BAG53713.1"/>
    <property type="molecule type" value="mRNA"/>
</dbReference>
<dbReference type="EMBL" id="AL035541">
    <property type="status" value="NOT_ANNOTATED_CDS"/>
    <property type="molecule type" value="Genomic_DNA"/>
</dbReference>
<dbReference type="EMBL" id="CH471077">
    <property type="protein sequence ID" value="EAW75511.1"/>
    <property type="molecule type" value="Genomic_DNA"/>
</dbReference>
<dbReference type="EMBL" id="BC028218">
    <property type="protein sequence ID" value="AAH28218.1"/>
    <property type="molecule type" value="mRNA"/>
</dbReference>
<dbReference type="CCDS" id="CCDS13461.1">
    <molecule id="Q9H171-1"/>
</dbReference>
<dbReference type="CCDS" id="CCDS54477.1">
    <molecule id="Q9H171-7"/>
</dbReference>
<dbReference type="CCDS" id="CCDS54478.1">
    <molecule id="Q9H171-6"/>
</dbReference>
<dbReference type="RefSeq" id="NP_001153889.1">
    <property type="nucleotide sequence ID" value="NM_001160417.1"/>
</dbReference>
<dbReference type="RefSeq" id="NP_001153890.1">
    <molecule id="Q9H171-7"/>
    <property type="nucleotide sequence ID" value="NM_001160418.2"/>
</dbReference>
<dbReference type="RefSeq" id="NP_001153891.1">
    <molecule id="Q9H171-6"/>
    <property type="nucleotide sequence ID" value="NM_001160419.3"/>
</dbReference>
<dbReference type="RefSeq" id="NP_001310895.1">
    <property type="nucleotide sequence ID" value="NM_001323966.1"/>
</dbReference>
<dbReference type="RefSeq" id="NP_110403.2">
    <molecule id="Q9H171-1"/>
    <property type="nucleotide sequence ID" value="NM_030776.3"/>
</dbReference>
<dbReference type="PDB" id="2L4M">
    <property type="method" value="NMR"/>
    <property type="chains" value="A=103-166"/>
</dbReference>
<dbReference type="PDB" id="2LNB">
    <property type="method" value="NMR"/>
    <property type="chains" value="A=6-74"/>
</dbReference>
<dbReference type="PDB" id="3EYI">
    <property type="method" value="X-ray"/>
    <property type="resolution" value="1.45 A"/>
    <property type="chains" value="A/B=103-166"/>
</dbReference>
<dbReference type="PDB" id="4KA4">
    <property type="method" value="X-ray"/>
    <property type="resolution" value="2.60 A"/>
    <property type="chains" value="A/B/D/E=96-165"/>
</dbReference>
<dbReference type="PDBsum" id="2L4M"/>
<dbReference type="PDBsum" id="2LNB"/>
<dbReference type="PDBsum" id="3EYI"/>
<dbReference type="PDBsum" id="4KA4"/>
<dbReference type="BMRB" id="Q9H171"/>
<dbReference type="SASBDB" id="Q9H171"/>
<dbReference type="SMR" id="Q9H171"/>
<dbReference type="BioGRID" id="123349">
    <property type="interactions" value="41"/>
</dbReference>
<dbReference type="CORUM" id="Q9H171"/>
<dbReference type="DIP" id="DIP-44121N"/>
<dbReference type="FunCoup" id="Q9H171">
    <property type="interactions" value="755"/>
</dbReference>
<dbReference type="IntAct" id="Q9H171">
    <property type="interactions" value="18"/>
</dbReference>
<dbReference type="MINT" id="Q9H171"/>
<dbReference type="STRING" id="9606.ENSP00000360215"/>
<dbReference type="GlyGen" id="Q9H171">
    <property type="glycosylation" value="1 site"/>
</dbReference>
<dbReference type="iPTMnet" id="Q9H171"/>
<dbReference type="PhosphoSitePlus" id="Q9H171"/>
<dbReference type="BioMuta" id="ZBP1"/>
<dbReference type="DMDM" id="71153189"/>
<dbReference type="jPOST" id="Q9H171"/>
<dbReference type="MassIVE" id="Q9H171"/>
<dbReference type="PaxDb" id="9606-ENSP00000360215"/>
<dbReference type="PeptideAtlas" id="Q9H171"/>
<dbReference type="ProteomicsDB" id="199"/>
<dbReference type="ProteomicsDB" id="24833"/>
<dbReference type="ProteomicsDB" id="80370">
    <molecule id="Q9H171-1"/>
</dbReference>
<dbReference type="ProteomicsDB" id="80371">
    <molecule id="Q9H171-2"/>
</dbReference>
<dbReference type="ProteomicsDB" id="80372">
    <molecule id="Q9H171-3"/>
</dbReference>
<dbReference type="ProteomicsDB" id="80373">
    <molecule id="Q9H171-4"/>
</dbReference>
<dbReference type="ProteomicsDB" id="80374">
    <molecule id="Q9H171-5"/>
</dbReference>
<dbReference type="Antibodypedia" id="14231">
    <property type="antibodies" value="215 antibodies from 36 providers"/>
</dbReference>
<dbReference type="DNASU" id="81030"/>
<dbReference type="Ensembl" id="ENST00000371173.8">
    <molecule id="Q9H171-1"/>
    <property type="protein sequence ID" value="ENSP00000360215.3"/>
    <property type="gene ID" value="ENSG00000124256.15"/>
</dbReference>
<dbReference type="Ensembl" id="ENST00000395822.7">
    <molecule id="Q9H171-7"/>
    <property type="protein sequence ID" value="ENSP00000379167.3"/>
    <property type="gene ID" value="ENSG00000124256.15"/>
</dbReference>
<dbReference type="Ensembl" id="ENST00000541799.1">
    <molecule id="Q9H171-6"/>
    <property type="protein sequence ID" value="ENSP00000440552.1"/>
    <property type="gene ID" value="ENSG00000124256.15"/>
</dbReference>
<dbReference type="GeneID" id="81030"/>
<dbReference type="KEGG" id="hsa:81030"/>
<dbReference type="MANE-Select" id="ENST00000371173.8">
    <property type="protein sequence ID" value="ENSP00000360215.3"/>
    <property type="RefSeq nucleotide sequence ID" value="NM_030776.3"/>
    <property type="RefSeq protein sequence ID" value="NP_110403.2"/>
</dbReference>
<dbReference type="UCSC" id="uc002xyo.4">
    <molecule id="Q9H171-1"/>
    <property type="organism name" value="human"/>
</dbReference>
<dbReference type="AGR" id="HGNC:16176"/>
<dbReference type="CTD" id="81030"/>
<dbReference type="DisGeNET" id="81030"/>
<dbReference type="GeneCards" id="ZBP1"/>
<dbReference type="HGNC" id="HGNC:16176">
    <property type="gene designation" value="ZBP1"/>
</dbReference>
<dbReference type="HPA" id="ENSG00000124256">
    <property type="expression patterns" value="Tissue enhanced (bone marrow, lymphoid tissue)"/>
</dbReference>
<dbReference type="MIM" id="606750">
    <property type="type" value="gene"/>
</dbReference>
<dbReference type="neXtProt" id="NX_Q9H171"/>
<dbReference type="OpenTargets" id="ENSG00000124256"/>
<dbReference type="PharmGKB" id="PA38094"/>
<dbReference type="VEuPathDB" id="HostDB:ENSG00000124256"/>
<dbReference type="eggNOG" id="ENOG502SRWE">
    <property type="taxonomic scope" value="Eukaryota"/>
</dbReference>
<dbReference type="GeneTree" id="ENSGT00390000002234"/>
<dbReference type="HOGENOM" id="CLU_053260_0_0_1"/>
<dbReference type="InParanoid" id="Q9H171"/>
<dbReference type="OMA" id="PATWCLA"/>
<dbReference type="OrthoDB" id="9837317at2759"/>
<dbReference type="PAN-GO" id="Q9H171">
    <property type="GO annotations" value="3 GO annotations based on evolutionary models"/>
</dbReference>
<dbReference type="PhylomeDB" id="Q9H171"/>
<dbReference type="TreeFam" id="TF337658"/>
<dbReference type="PathwayCommons" id="Q9H171"/>
<dbReference type="Reactome" id="R-HSA-1606322">
    <property type="pathway name" value="ZBP1(DAI) mediated induction of type I IFNs"/>
</dbReference>
<dbReference type="Reactome" id="R-HSA-1606341">
    <property type="pathway name" value="IRF3 mediated activation of type 1 IFN"/>
</dbReference>
<dbReference type="Reactome" id="R-HSA-1810476">
    <property type="pathway name" value="RIP-mediated NFkB activation via ZBP1"/>
</dbReference>
<dbReference type="Reactome" id="R-HSA-3134975">
    <property type="pathway name" value="Regulation of innate immune responses to cytosolic DNA"/>
</dbReference>
<dbReference type="Reactome" id="R-HSA-9679191">
    <property type="pathway name" value="Potential therapeutics for SARS"/>
</dbReference>
<dbReference type="SignaLink" id="Q9H171"/>
<dbReference type="SIGNOR" id="Q9H171"/>
<dbReference type="BioGRID-ORCS" id="81030">
    <property type="hits" value="7 hits in 1149 CRISPR screens"/>
</dbReference>
<dbReference type="CD-CODE" id="DEE660B4">
    <property type="entry name" value="Stress granule"/>
</dbReference>
<dbReference type="ChiTaRS" id="ZBP1">
    <property type="organism name" value="human"/>
</dbReference>
<dbReference type="EvolutionaryTrace" id="Q9H171"/>
<dbReference type="GeneWiki" id="ZBP1"/>
<dbReference type="GenomeRNAi" id="81030"/>
<dbReference type="Pharos" id="Q9H171">
    <property type="development level" value="Tbio"/>
</dbReference>
<dbReference type="PRO" id="PR:Q9H171"/>
<dbReference type="Proteomes" id="UP000005640">
    <property type="component" value="Chromosome 20"/>
</dbReference>
<dbReference type="RNAct" id="Q9H171">
    <property type="molecule type" value="protein"/>
</dbReference>
<dbReference type="Bgee" id="ENSG00000124256">
    <property type="expression patterns" value="Expressed in granulocyte and 139 other cell types or tissues"/>
</dbReference>
<dbReference type="ExpressionAtlas" id="Q9H171">
    <property type="expression patterns" value="baseline and differential"/>
</dbReference>
<dbReference type="GO" id="GO:0005737">
    <property type="term" value="C:cytoplasm"/>
    <property type="evidence" value="ECO:0000314"/>
    <property type="project" value="UniProtKB"/>
</dbReference>
<dbReference type="GO" id="GO:0005829">
    <property type="term" value="C:cytosol"/>
    <property type="evidence" value="ECO:0000314"/>
    <property type="project" value="MGI"/>
</dbReference>
<dbReference type="GO" id="GO:0005634">
    <property type="term" value="C:nucleus"/>
    <property type="evidence" value="ECO:0000314"/>
    <property type="project" value="UniProtKB"/>
</dbReference>
<dbReference type="GO" id="GO:0003677">
    <property type="term" value="F:DNA binding"/>
    <property type="evidence" value="ECO:0000314"/>
    <property type="project" value="MGI"/>
</dbReference>
<dbReference type="GO" id="GO:0003726">
    <property type="term" value="F:double-stranded RNA adenosine deaminase activity"/>
    <property type="evidence" value="ECO:0007669"/>
    <property type="project" value="InterPro"/>
</dbReference>
<dbReference type="GO" id="GO:0003725">
    <property type="term" value="F:double-stranded RNA binding"/>
    <property type="evidence" value="ECO:0000250"/>
    <property type="project" value="UniProtKB"/>
</dbReference>
<dbReference type="GO" id="GO:0042802">
    <property type="term" value="F:identical protein binding"/>
    <property type="evidence" value="ECO:0000353"/>
    <property type="project" value="IntAct"/>
</dbReference>
<dbReference type="GO" id="GO:0003692">
    <property type="term" value="F:left-handed Z-DNA binding"/>
    <property type="evidence" value="ECO:0000303"/>
    <property type="project" value="UniProtKB"/>
</dbReference>
<dbReference type="GO" id="GO:0003723">
    <property type="term" value="F:RNA binding"/>
    <property type="evidence" value="ECO:0000314"/>
    <property type="project" value="UniProt"/>
</dbReference>
<dbReference type="GO" id="GO:0002218">
    <property type="term" value="P:activation of innate immune response"/>
    <property type="evidence" value="ECO:0000250"/>
    <property type="project" value="UniProtKB"/>
</dbReference>
<dbReference type="GO" id="GO:0140374">
    <property type="term" value="P:antiviral innate immune response"/>
    <property type="evidence" value="ECO:0000314"/>
    <property type="project" value="UniProt"/>
</dbReference>
<dbReference type="GO" id="GO:0006915">
    <property type="term" value="P:apoptotic process"/>
    <property type="evidence" value="ECO:0007669"/>
    <property type="project" value="UniProtKB-KW"/>
</dbReference>
<dbReference type="GO" id="GO:0050832">
    <property type="term" value="P:defense response to fungus"/>
    <property type="evidence" value="ECO:0000250"/>
    <property type="project" value="UniProtKB"/>
</dbReference>
<dbReference type="GO" id="GO:0051607">
    <property type="term" value="P:defense response to virus"/>
    <property type="evidence" value="ECO:0000315"/>
    <property type="project" value="UniProtKB"/>
</dbReference>
<dbReference type="GO" id="GO:0043065">
    <property type="term" value="P:positive regulation of apoptotic process"/>
    <property type="evidence" value="ECO:0000250"/>
    <property type="project" value="UniProtKB"/>
</dbReference>
<dbReference type="GO" id="GO:0050729">
    <property type="term" value="P:positive regulation of inflammatory response"/>
    <property type="evidence" value="ECO:0000250"/>
    <property type="project" value="UniProtKB"/>
</dbReference>
<dbReference type="GO" id="GO:0060545">
    <property type="term" value="P:positive regulation of necroptotic process"/>
    <property type="evidence" value="ECO:0000315"/>
    <property type="project" value="UniProtKB"/>
</dbReference>
<dbReference type="GO" id="GO:0060340">
    <property type="term" value="P:positive regulation of type I interferon-mediated signaling pathway"/>
    <property type="evidence" value="ECO:0000318"/>
    <property type="project" value="GO_Central"/>
</dbReference>
<dbReference type="GO" id="GO:0070269">
    <property type="term" value="P:pyroptotic inflammatory response"/>
    <property type="evidence" value="ECO:0000250"/>
    <property type="project" value="UniProtKB"/>
</dbReference>
<dbReference type="GO" id="GO:0050727">
    <property type="term" value="P:regulation of inflammatory response"/>
    <property type="evidence" value="ECO:0000250"/>
    <property type="project" value="UniProtKB"/>
</dbReference>
<dbReference type="GO" id="GO:2000659">
    <property type="term" value="P:regulation of interleukin-1-mediated signaling pathway"/>
    <property type="evidence" value="ECO:0000250"/>
    <property type="project" value="UniProtKB"/>
</dbReference>
<dbReference type="FunFam" id="1.10.10.10:FF:000466">
    <property type="entry name" value="Z-DNA binding protein 1"/>
    <property type="match status" value="1"/>
</dbReference>
<dbReference type="FunFam" id="1.10.10.10:FF:000525">
    <property type="entry name" value="Z-DNA binding protein 1"/>
    <property type="match status" value="1"/>
</dbReference>
<dbReference type="Gene3D" id="1.10.10.10">
    <property type="entry name" value="Winged helix-like DNA-binding domain superfamily/Winged helix DNA-binding domain"/>
    <property type="match status" value="2"/>
</dbReference>
<dbReference type="InterPro" id="IPR025735">
    <property type="entry name" value="RHIM"/>
</dbReference>
<dbReference type="InterPro" id="IPR036388">
    <property type="entry name" value="WH-like_DNA-bd_sf"/>
</dbReference>
<dbReference type="InterPro" id="IPR036390">
    <property type="entry name" value="WH_DNA-bd_sf"/>
</dbReference>
<dbReference type="InterPro" id="IPR042371">
    <property type="entry name" value="Z_dom"/>
</dbReference>
<dbReference type="InterPro" id="IPR042361">
    <property type="entry name" value="ZBP1"/>
</dbReference>
<dbReference type="PANTHER" id="PTHR14966">
    <property type="entry name" value="Z-DNA-BINDING PROTEIN 1"/>
    <property type="match status" value="1"/>
</dbReference>
<dbReference type="PANTHER" id="PTHR14966:SF0">
    <property type="entry name" value="Z-DNA-BINDING PROTEIN 1"/>
    <property type="match status" value="1"/>
</dbReference>
<dbReference type="Pfam" id="PF12721">
    <property type="entry name" value="RHIM"/>
    <property type="match status" value="1"/>
</dbReference>
<dbReference type="Pfam" id="PF02295">
    <property type="entry name" value="z-alpha"/>
    <property type="match status" value="1"/>
</dbReference>
<dbReference type="SMART" id="SM00550">
    <property type="entry name" value="Zalpha"/>
    <property type="match status" value="2"/>
</dbReference>
<dbReference type="SUPFAM" id="SSF46785">
    <property type="entry name" value="Winged helix' DNA-binding domain"/>
    <property type="match status" value="2"/>
</dbReference>
<dbReference type="PROSITE" id="PS50139">
    <property type="entry name" value="Z_BINDING"/>
    <property type="match status" value="2"/>
</dbReference>
<gene>
    <name evidence="15 21" type="primary">ZBP1</name>
    <name evidence="21" type="synonym">C20orf183</name>
    <name evidence="12" type="synonym">DLM1</name>
</gene>
<reference key="1">
    <citation type="journal article" date="2002" name="Nucleic Acids Res.">
        <title>Complex regulation of the human gene for the Z-DNA binding protein DLM-1.</title>
        <authorList>
            <person name="Rothenburg S."/>
            <person name="Schwartz T."/>
            <person name="Koch-Nolte F."/>
            <person name="Haag F."/>
        </authorList>
    </citation>
    <scope>NUCLEOTIDE SEQUENCE [MRNA]</scope>
    <scope>TISSUE SPECIFICITY</scope>
    <scope>ALTERNATIVE SPLICING</scope>
    <scope>VARIANTS LYS-88 AND ARG-258</scope>
    <source>
        <tissue>Spleen</tissue>
    </source>
</reference>
<reference key="2">
    <citation type="submission" date="2005-06" db="EMBL/GenBank/DDBJ databases">
        <authorList>
            <person name="Heil O."/>
            <person name="Ebert L."/>
            <person name="Hennig S."/>
            <person name="Henze S."/>
            <person name="Radelof U."/>
            <person name="Schneider D."/>
            <person name="Korn B."/>
        </authorList>
    </citation>
    <scope>NUCLEOTIDE SEQUENCE [LARGE SCALE MRNA] (ISOFORM 6)</scope>
    <scope>VARIANT LYS-88</scope>
    <source>
        <tissue>T-cell</tissue>
    </source>
</reference>
<reference key="3">
    <citation type="journal article" date="2004" name="Nat. Genet.">
        <title>Complete sequencing and characterization of 21,243 full-length human cDNAs.</title>
        <authorList>
            <person name="Ota T."/>
            <person name="Suzuki Y."/>
            <person name="Nishikawa T."/>
            <person name="Otsuki T."/>
            <person name="Sugiyama T."/>
            <person name="Irie R."/>
            <person name="Wakamatsu A."/>
            <person name="Hayashi K."/>
            <person name="Sato H."/>
            <person name="Nagai K."/>
            <person name="Kimura K."/>
            <person name="Makita H."/>
            <person name="Sekine M."/>
            <person name="Obayashi M."/>
            <person name="Nishi T."/>
            <person name="Shibahara T."/>
            <person name="Tanaka T."/>
            <person name="Ishii S."/>
            <person name="Yamamoto J."/>
            <person name="Saito K."/>
            <person name="Kawai Y."/>
            <person name="Isono Y."/>
            <person name="Nakamura Y."/>
            <person name="Nagahari K."/>
            <person name="Murakami K."/>
            <person name="Yasuda T."/>
            <person name="Iwayanagi T."/>
            <person name="Wagatsuma M."/>
            <person name="Shiratori A."/>
            <person name="Sudo H."/>
            <person name="Hosoiri T."/>
            <person name="Kaku Y."/>
            <person name="Kodaira H."/>
            <person name="Kondo H."/>
            <person name="Sugawara M."/>
            <person name="Takahashi M."/>
            <person name="Kanda K."/>
            <person name="Yokoi T."/>
            <person name="Furuya T."/>
            <person name="Kikkawa E."/>
            <person name="Omura Y."/>
            <person name="Abe K."/>
            <person name="Kamihara K."/>
            <person name="Katsuta N."/>
            <person name="Sato K."/>
            <person name="Tanikawa M."/>
            <person name="Yamazaki M."/>
            <person name="Ninomiya K."/>
            <person name="Ishibashi T."/>
            <person name="Yamashita H."/>
            <person name="Murakawa K."/>
            <person name="Fujimori K."/>
            <person name="Tanai H."/>
            <person name="Kimata M."/>
            <person name="Watanabe M."/>
            <person name="Hiraoka S."/>
            <person name="Chiba Y."/>
            <person name="Ishida S."/>
            <person name="Ono Y."/>
            <person name="Takiguchi S."/>
            <person name="Watanabe S."/>
            <person name="Yosida M."/>
            <person name="Hotuta T."/>
            <person name="Kusano J."/>
            <person name="Kanehori K."/>
            <person name="Takahashi-Fujii A."/>
            <person name="Hara H."/>
            <person name="Tanase T.-O."/>
            <person name="Nomura Y."/>
            <person name="Togiya S."/>
            <person name="Komai F."/>
            <person name="Hara R."/>
            <person name="Takeuchi K."/>
            <person name="Arita M."/>
            <person name="Imose N."/>
            <person name="Musashino K."/>
            <person name="Yuuki H."/>
            <person name="Oshima A."/>
            <person name="Sasaki N."/>
            <person name="Aotsuka S."/>
            <person name="Yoshikawa Y."/>
            <person name="Matsunawa H."/>
            <person name="Ichihara T."/>
            <person name="Shiohata N."/>
            <person name="Sano S."/>
            <person name="Moriya S."/>
            <person name="Momiyama H."/>
            <person name="Satoh N."/>
            <person name="Takami S."/>
            <person name="Terashima Y."/>
            <person name="Suzuki O."/>
            <person name="Nakagawa S."/>
            <person name="Senoh A."/>
            <person name="Mizoguchi H."/>
            <person name="Goto Y."/>
            <person name="Shimizu F."/>
            <person name="Wakebe H."/>
            <person name="Hishigaki H."/>
            <person name="Watanabe T."/>
            <person name="Sugiyama A."/>
            <person name="Takemoto M."/>
            <person name="Kawakami B."/>
            <person name="Yamazaki M."/>
            <person name="Watanabe K."/>
            <person name="Kumagai A."/>
            <person name="Itakura S."/>
            <person name="Fukuzumi Y."/>
            <person name="Fujimori Y."/>
            <person name="Komiyama M."/>
            <person name="Tashiro H."/>
            <person name="Tanigami A."/>
            <person name="Fujiwara T."/>
            <person name="Ono T."/>
            <person name="Yamada K."/>
            <person name="Fujii Y."/>
            <person name="Ozaki K."/>
            <person name="Hirao M."/>
            <person name="Ohmori Y."/>
            <person name="Kawabata A."/>
            <person name="Hikiji T."/>
            <person name="Kobatake N."/>
            <person name="Inagaki H."/>
            <person name="Ikema Y."/>
            <person name="Okamoto S."/>
            <person name="Okitani R."/>
            <person name="Kawakami T."/>
            <person name="Noguchi S."/>
            <person name="Itoh T."/>
            <person name="Shigeta K."/>
            <person name="Senba T."/>
            <person name="Matsumura K."/>
            <person name="Nakajima Y."/>
            <person name="Mizuno T."/>
            <person name="Morinaga M."/>
            <person name="Sasaki M."/>
            <person name="Togashi T."/>
            <person name="Oyama M."/>
            <person name="Hata H."/>
            <person name="Watanabe M."/>
            <person name="Komatsu T."/>
            <person name="Mizushima-Sugano J."/>
            <person name="Satoh T."/>
            <person name="Shirai Y."/>
            <person name="Takahashi Y."/>
            <person name="Nakagawa K."/>
            <person name="Okumura K."/>
            <person name="Nagase T."/>
            <person name="Nomura N."/>
            <person name="Kikuchi H."/>
            <person name="Masuho Y."/>
            <person name="Yamashita R."/>
            <person name="Nakai K."/>
            <person name="Yada T."/>
            <person name="Nakamura Y."/>
            <person name="Ohara O."/>
            <person name="Isogai T."/>
            <person name="Sugano S."/>
        </authorList>
    </citation>
    <scope>NUCLEOTIDE SEQUENCE [LARGE SCALE MRNA] (ISOFORM 7)</scope>
    <scope>VARIANT ARG-258</scope>
</reference>
<reference key="4">
    <citation type="journal article" date="2001" name="Nature">
        <title>The DNA sequence and comparative analysis of human chromosome 20.</title>
        <authorList>
            <person name="Deloukas P."/>
            <person name="Matthews L.H."/>
            <person name="Ashurst J.L."/>
            <person name="Burton J."/>
            <person name="Gilbert J.G.R."/>
            <person name="Jones M."/>
            <person name="Stavrides G."/>
            <person name="Almeida J.P."/>
            <person name="Babbage A.K."/>
            <person name="Bagguley C.L."/>
            <person name="Bailey J."/>
            <person name="Barlow K.F."/>
            <person name="Bates K.N."/>
            <person name="Beard L.M."/>
            <person name="Beare D.M."/>
            <person name="Beasley O.P."/>
            <person name="Bird C.P."/>
            <person name="Blakey S.E."/>
            <person name="Bridgeman A.M."/>
            <person name="Brown A.J."/>
            <person name="Buck D."/>
            <person name="Burrill W.D."/>
            <person name="Butler A.P."/>
            <person name="Carder C."/>
            <person name="Carter N.P."/>
            <person name="Chapman J.C."/>
            <person name="Clamp M."/>
            <person name="Clark G."/>
            <person name="Clark L.N."/>
            <person name="Clark S.Y."/>
            <person name="Clee C.M."/>
            <person name="Clegg S."/>
            <person name="Cobley V.E."/>
            <person name="Collier R.E."/>
            <person name="Connor R.E."/>
            <person name="Corby N.R."/>
            <person name="Coulson A."/>
            <person name="Coville G.J."/>
            <person name="Deadman R."/>
            <person name="Dhami P.D."/>
            <person name="Dunn M."/>
            <person name="Ellington A.G."/>
            <person name="Frankland J.A."/>
            <person name="Fraser A."/>
            <person name="French L."/>
            <person name="Garner P."/>
            <person name="Grafham D.V."/>
            <person name="Griffiths C."/>
            <person name="Griffiths M.N.D."/>
            <person name="Gwilliam R."/>
            <person name="Hall R.E."/>
            <person name="Hammond S."/>
            <person name="Harley J.L."/>
            <person name="Heath P.D."/>
            <person name="Ho S."/>
            <person name="Holden J.L."/>
            <person name="Howden P.J."/>
            <person name="Huckle E."/>
            <person name="Hunt A.R."/>
            <person name="Hunt S.E."/>
            <person name="Jekosch K."/>
            <person name="Johnson C.M."/>
            <person name="Johnson D."/>
            <person name="Kay M.P."/>
            <person name="Kimberley A.M."/>
            <person name="King A."/>
            <person name="Knights A."/>
            <person name="Laird G.K."/>
            <person name="Lawlor S."/>
            <person name="Lehvaeslaiho M.H."/>
            <person name="Leversha M.A."/>
            <person name="Lloyd C."/>
            <person name="Lloyd D.M."/>
            <person name="Lovell J.D."/>
            <person name="Marsh V.L."/>
            <person name="Martin S.L."/>
            <person name="McConnachie L.J."/>
            <person name="McLay K."/>
            <person name="McMurray A.A."/>
            <person name="Milne S.A."/>
            <person name="Mistry D."/>
            <person name="Moore M.J.F."/>
            <person name="Mullikin J.C."/>
            <person name="Nickerson T."/>
            <person name="Oliver K."/>
            <person name="Parker A."/>
            <person name="Patel R."/>
            <person name="Pearce T.A.V."/>
            <person name="Peck A.I."/>
            <person name="Phillimore B.J.C.T."/>
            <person name="Prathalingam S.R."/>
            <person name="Plumb R.W."/>
            <person name="Ramsay H."/>
            <person name="Rice C.M."/>
            <person name="Ross M.T."/>
            <person name="Scott C.E."/>
            <person name="Sehra H.K."/>
            <person name="Shownkeen R."/>
            <person name="Sims S."/>
            <person name="Skuce C.D."/>
            <person name="Smith M.L."/>
            <person name="Soderlund C."/>
            <person name="Steward C.A."/>
            <person name="Sulston J.E."/>
            <person name="Swann R.M."/>
            <person name="Sycamore N."/>
            <person name="Taylor R."/>
            <person name="Tee L."/>
            <person name="Thomas D.W."/>
            <person name="Thorpe A."/>
            <person name="Tracey A."/>
            <person name="Tromans A.C."/>
            <person name="Vaudin M."/>
            <person name="Wall M."/>
            <person name="Wallis J.M."/>
            <person name="Whitehead S.L."/>
            <person name="Whittaker P."/>
            <person name="Willey D.L."/>
            <person name="Williams L."/>
            <person name="Williams S.A."/>
            <person name="Wilming L."/>
            <person name="Wray P.W."/>
            <person name="Hubbard T."/>
            <person name="Durbin R.M."/>
            <person name="Bentley D.R."/>
            <person name="Beck S."/>
            <person name="Rogers J."/>
        </authorList>
    </citation>
    <scope>NUCLEOTIDE SEQUENCE [LARGE SCALE GENOMIC DNA]</scope>
</reference>
<reference key="5">
    <citation type="submission" date="2005-09" db="EMBL/GenBank/DDBJ databases">
        <authorList>
            <person name="Mural R.J."/>
            <person name="Istrail S."/>
            <person name="Sutton G."/>
            <person name="Florea L."/>
            <person name="Halpern A.L."/>
            <person name="Mobarry C.M."/>
            <person name="Lippert R."/>
            <person name="Walenz B."/>
            <person name="Shatkay H."/>
            <person name="Dew I."/>
            <person name="Miller J.R."/>
            <person name="Flanigan M.J."/>
            <person name="Edwards N.J."/>
            <person name="Bolanos R."/>
            <person name="Fasulo D."/>
            <person name="Halldorsson B.V."/>
            <person name="Hannenhalli S."/>
            <person name="Turner R."/>
            <person name="Yooseph S."/>
            <person name="Lu F."/>
            <person name="Nusskern D.R."/>
            <person name="Shue B.C."/>
            <person name="Zheng X.H."/>
            <person name="Zhong F."/>
            <person name="Delcher A.L."/>
            <person name="Huson D.H."/>
            <person name="Kravitz S.A."/>
            <person name="Mouchard L."/>
            <person name="Reinert K."/>
            <person name="Remington K.A."/>
            <person name="Clark A.G."/>
            <person name="Waterman M.S."/>
            <person name="Eichler E.E."/>
            <person name="Adams M.D."/>
            <person name="Hunkapiller M.W."/>
            <person name="Myers E.W."/>
            <person name="Venter J.C."/>
        </authorList>
    </citation>
    <scope>NUCLEOTIDE SEQUENCE [LARGE SCALE GENOMIC DNA]</scope>
    <scope>VARIANT ARG-258</scope>
</reference>
<reference key="6">
    <citation type="journal article" date="2004" name="Genome Res.">
        <title>The status, quality, and expansion of the NIH full-length cDNA project: the Mammalian Gene Collection (MGC).</title>
        <authorList>
            <consortium name="The MGC Project Team"/>
        </authorList>
    </citation>
    <scope>NUCLEOTIDE SEQUENCE [LARGE SCALE MRNA] (ISOFORM 5)</scope>
    <source>
        <tissue>Blood</tissue>
    </source>
</reference>
<reference key="7">
    <citation type="journal article" date="2006" name="Biochem. Biophys. Res. Commun.">
        <title>Intracellular localization of human ZBP1: Differential regulation by the Z-DNA binding domain, Zalpha, in splice variants.</title>
        <authorList>
            <person name="Pham H.T."/>
            <person name="Park M.Y."/>
            <person name="Kim K.K."/>
            <person name="Kim Y.G."/>
            <person name="Ahn J.H."/>
        </authorList>
    </citation>
    <scope>SUBCELLULAR LOCATION</scope>
</reference>
<reference key="8">
    <citation type="journal article" date="2006" name="Nucleic Acids Res.">
        <title>ZBP1 subcellular localization and association with stress granules is controlled by its Z-DNA binding domains.</title>
        <authorList>
            <person name="Deigendesch N."/>
            <person name="Koch-Nolte F."/>
            <person name="Rothenburg S."/>
        </authorList>
    </citation>
    <scope>SUBCELLULAR LOCATION</scope>
</reference>
<reference key="9">
    <citation type="journal article" date="2013" name="J. Virol.">
        <title>DNA sensing-independent inhibition of herpes simplex virus 1 replication by DAI/ZBP1.</title>
        <authorList>
            <person name="Pham T.H."/>
            <person name="Kwon K.M."/>
            <person name="Kim Y.E."/>
            <person name="Kim K.K."/>
            <person name="Ahn J.H."/>
        </authorList>
    </citation>
    <scope>INTERACTION WITH HUMAN HERPESVIRUS 1 ICP0 (MICROBIAL INFECTION)</scope>
</reference>
<reference key="10">
    <citation type="journal article" date="2018" name="Trends Immunol.">
        <title>ZBP1: innate sensor regulating cell death and inflammation.</title>
        <authorList>
            <person name="Kuriakose T."/>
            <person name="Kanneganti T.D."/>
        </authorList>
    </citation>
    <scope>REVIEW</scope>
</reference>
<reference key="11">
    <citation type="journal article" date="2020" name="Cell">
        <title>Influenza virus Z-RNAs induce ZBP1-mediated necroptosis.</title>
        <authorList>
            <person name="Zhang T."/>
            <person name="Yin C."/>
            <person name="Boyd D.F."/>
            <person name="Quarato G."/>
            <person name="Ingram J.P."/>
            <person name="Shubina M."/>
            <person name="Ragan K.B."/>
            <person name="Ishizuka T."/>
            <person name="Crawford J.C."/>
            <person name="Tummers B."/>
            <person name="Rodriguez D.A."/>
            <person name="Xue J."/>
            <person name="Peri S."/>
            <person name="Kaiser W.J."/>
            <person name="Lopez C.B."/>
            <person name="Xu Y."/>
            <person name="Upton J.W."/>
            <person name="Thomas P.G."/>
            <person name="Green D.R."/>
            <person name="Balachandran S."/>
        </authorList>
    </citation>
    <scope>FUNCTION</scope>
</reference>
<reference key="12">
    <citation type="journal article" date="2021" name="Biophys. Chem.">
        <title>Herpes simplex virus encoded ICP6 protein forms functional amyloid assemblies with necroptosis-associated host proteins.</title>
        <authorList>
            <person name="Shanmugam N."/>
            <person name="Baker M.O.D.G."/>
            <person name="Sanz-Hernandez M."/>
            <person name="Sierecki E."/>
            <person name="Gambin Y."/>
            <person name="Steain M."/>
            <person name="Pham C.L.L."/>
            <person name="Sunde M."/>
        </authorList>
    </citation>
    <scope>FUNCTION (MICROBIAL INFECTION)</scope>
    <scope>INTERACTION WITH HHV-1 PROTEIN RIR1 (MICROBIAL INFECTION)</scope>
    <scope>DOMAIN (MICROBIAL INFECTION)</scope>
</reference>
<reference key="13">
    <citation type="journal article" date="2006" name="Biochim. Biophys. Acta">
        <title>Biochemical characterization and preliminary X-ray crystallographic study of the domains of human ZBP1 bound to left-handed Z-DNA.</title>
        <authorList>
            <person name="Ha S.C."/>
            <person name="Van Quyen D."/>
            <person name="Hwang H.Y."/>
            <person name="Oh D.B."/>
            <person name="Brown B.A. II"/>
            <person name="Lee S.M."/>
            <person name="Park H.J."/>
            <person name="Ahn J.H."/>
            <person name="Kim K.K."/>
            <person name="Kim Y.G."/>
        </authorList>
    </citation>
    <scope>CRYSTALLIZATION</scope>
</reference>
<reference evidence="24" key="14">
    <citation type="journal article" date="2008" name="Proc. Natl. Acad. Sci. U.S.A.">
        <title>The crystal structure of the second Z-DNA binding domain of human DAI (ZBP1) in complex with Z-DNA reveals an unusual binding mode to Z-DNA.</title>
        <authorList>
            <person name="Ha S.C."/>
            <person name="Kim D."/>
            <person name="Hwang H.Y."/>
            <person name="Rich A."/>
            <person name="Kim Y.G."/>
            <person name="Kim K.K."/>
        </authorList>
    </citation>
    <scope>X-RAY CRYSTALLOGRAPHY (1.45 ANGSTROMS) OF 103-166</scope>
    <scope>DNA-BINDING</scope>
</reference>
<reference evidence="22" key="15">
    <citation type="journal article" date="2011" name="Proc. Natl. Acad. Sci. U.S.A.">
        <title>Solution structure of the Zbeta domain of human DNA-dependent activator of IFN-regulatory factors and its binding modes to B- and Z-DNAs.</title>
        <authorList>
            <person name="Kim K."/>
            <person name="Khayrutdinov B.I."/>
            <person name="Lee C.K."/>
            <person name="Cheong H.K."/>
            <person name="Kang S.W."/>
            <person name="Park H."/>
            <person name="Lee S."/>
            <person name="Kim Y.G."/>
            <person name="Jee J."/>
            <person name="Rich A."/>
            <person name="Kim K.K."/>
            <person name="Jeon Y.H."/>
        </authorList>
    </citation>
    <scope>STRUCTURE BY NMR OF 103-166</scope>
</reference>
<reference evidence="23" key="16">
    <citation type="journal article" date="2014" name="J. Biomol. NMR">
        <title>Solution structure of the free Zalpha domain of human DLM-1 (ZBP1/DAI), a Z-DNA binding domain.</title>
        <authorList>
            <person name="Yang Y."/>
            <person name="Ramelot T.A."/>
            <person name="Lee H.W."/>
            <person name="Xiao R."/>
            <person name="Everett J.K."/>
            <person name="Montelione G.T."/>
            <person name="Prestegard J.H."/>
            <person name="Kennedy M.A."/>
        </authorList>
    </citation>
    <scope>STRUCTURE BY NMR OF 6-74</scope>
</reference>
<comment type="function">
    <text evidence="1 8">Key innate sensor that recognizes and binds Z-RNA structures, which are produced by a number of viruses, such as herpesvirus, orthomyxovirus or flavivirus, and triggers different forms of cell death (PubMed:32200799). ZBP1 acts as an essential mediator of pyroptosis, necroptosis and apoptosis (PANoptosis), an integral part of host defense against pathogens, by activating RIPK3, caspase-8 (CASP8), and the NLRP3 inflammasome (By similarity). Key activator of necroptosis, a programmed cell death process in response to death-inducing TNF-alpha family members, via its ability to bind Z-RNA: once activated upon Z-RNA-binding, ZBP1 interacts and stimulates RIPK3 kinase, which phosphorylates and activates MLKL, triggering execution of programmed necrosis (By similarity). In addition to TNF-induced necroptosis, necroptosis can also take place in the nucleus in response to orthomyxoviruses infection: ZBP1 recognizes and binds Z-RNA structures that are produced in infected nuclei by orthomyxoviruses, such as the influenza A virus (IAV), leading to ZBP1 activation, RIPK3 stimulation and subsequent MLKL phosphorylation, triggering disruption of the nuclear envelope and leakage of cellular DNA into the cytosol (PubMed:32200799). ZBP1-dependent cell death in response to IAV infection promotes interleukin-1 alpha (IL1A) induction in an NLRP3-inflammasome-independent manner: IL1A expression is required for the optimal interleukin-1 beta (IL1B) production, and together, these cytokines promote infiltration of inflammatory neutrophils to the lung, leading to the formation of neutrophil extracellular traps (By similarity). In addition to its direct role in driving necroptosis via its ability to sense Z-RNAs, also involved in PANoptosis triggered in response to bacterial infection: component of the AIM2 PANoptosome complex, a multiprotein complex that triggers PANoptosis (By similarity). Also acts as the apical sensor of fungal infection responsible for activating PANoptosis (By similarity). Involved in CASP8-mediated cell death via its interaction with RIPK1 but independently of its ability to sense Z-RNAs (By similarity). In some cell types, also able to restrict viral replication by promoting cell death-independent responses (By similarity). In response to Zika virus infection in neurons, promotes a cell death-independent pathway that restricts viral replication: together with RIPK3, promotes a death-independent transcriptional program that modifies the cellular metabolism via up-regulation expression of the enzyme ACOD1/IRG1 and production of the metabolite itaconate (By similarity). Itaconate inhibits the activity of succinate dehydrogenase, generating a metabolic state in neurons that suppresses replication of viral genomes (By similarity).</text>
</comment>
<comment type="function">
    <text evidence="9">(Microbial infection) In case of herpes simplex virus 1/HHV-1 infection, forms hetero-amyloid structures with HHV-1 protein RIR1/ICP6 which may inhibit ZBP1-mediated necroptosis, thereby preventing host cell death pathway and allowing viral evasion.</text>
</comment>
<comment type="activity regulation">
    <text evidence="1">ZBP1-dependent necroptosis is normally inhibited by RIPK1: RIPK1 inhibits the ZBP1-induced activation of RIPK3 via FADD-mediated recruitment of CASP8, which cleaves RIPK1 and limits TNF-induced necroptosis.</text>
</comment>
<comment type="subunit">
    <text evidence="1">Homodimer (By similarity). Interacts (via RIP homotypic interaction motif) with RIPK3; leading to RIPK3 activation and necroptosis; interaction is enhanced by CASP6 (By similarity). Interacts (via RIP homotypic interaction motif) with RIPK1 (By similarity). Component of the AIM2 PANoptosome complex, a multiprotein complex that drives inflammatory cell death (PANoptosis) (By similarity).</text>
</comment>
<comment type="subunit">
    <text evidence="9 20">(Microbial infection) Interacts (via RIP homotypic interaction motif/RHIM) with herpes simplex virus 1/HHV-1 protein RIR1/ICP6 (via RHIM); this interaction may induce heteromeric amyloid assemblies and prevent necroptosis activation (PubMed:33348174). Interacts with human herpes simplex virus 1/HHV-1 protein ICP0 (Probable).</text>
</comment>
<comment type="interaction">
    <interactant intactId="EBI-6264672">
        <id>Q9H171</id>
    </interactant>
    <interactant intactId="EBI-466029">
        <id>P42858</id>
        <label>HTT</label>
    </interactant>
    <organismsDiffer>false</organismsDiffer>
    <experiments>6</experiments>
</comment>
<comment type="interaction">
    <interactant intactId="EBI-6264672">
        <id>Q9H171</id>
    </interactant>
    <interactant intactId="EBI-744525">
        <id>Q13601</id>
        <label>KRR1</label>
    </interactant>
    <organismsDiffer>false</organismsDiffer>
    <experiments>3</experiments>
</comment>
<comment type="interaction">
    <interactant intactId="EBI-6264672">
        <id>Q9H171</id>
    </interactant>
    <interactant intactId="EBI-298250">
        <id>Q9Y572</id>
        <label>RIPK3</label>
    </interactant>
    <organismsDiffer>false</organismsDiffer>
    <experiments>4</experiments>
</comment>
<comment type="interaction">
    <interactant intactId="EBI-15747763">
        <id>Q9H171-1</id>
    </interactant>
    <interactant intactId="EBI-15747763">
        <id>Q9H171-1</id>
        <label>ZBP1</label>
    </interactant>
    <organismsDiffer>false</organismsDiffer>
    <experiments>2</experiments>
</comment>
<comment type="subcellular location">
    <subcellularLocation>
        <location evidence="6 7">Cytoplasm</location>
    </subcellularLocation>
    <subcellularLocation>
        <location evidence="6 7">Nucleus</location>
    </subcellularLocation>
    <text evidence="1 6 7">Mainly cytoplasmic (PubMed:16876127, PubMed:16990255). Accumulates in the nucleus in response to influenza A virus (IAV) infection: senses IAV defective viral genomes RNA in the nucleus (By similarity).</text>
</comment>
<comment type="subcellular location">
    <molecule>Isoform 7</molecule>
    <subcellularLocation>
        <location evidence="6 7">Cytoplasm</location>
    </subcellularLocation>
    <subcellularLocation>
        <location evidence="6 7">Nucleus</location>
    </subcellularLocation>
    <text evidence="6 7">Compared to isoform 1, a higher proportion of this isoform is localized in the nucleus.</text>
</comment>
<comment type="alternative products">
    <event type="alternative splicing"/>
    <isoform>
        <id>Q9H171-1</id>
        <name>1</name>
        <sequence type="displayed"/>
    </isoform>
    <isoform>
        <id>Q9H171-2</id>
        <name>2</name>
        <sequence type="described" ref="VSP_004081"/>
    </isoform>
    <isoform>
        <id>Q9H171-3</id>
        <name>3</name>
        <sequence type="described" ref="VSP_004082"/>
    </isoform>
    <isoform>
        <id>Q9H171-4</id>
        <name>4</name>
        <sequence type="described" ref="VSP_004078"/>
    </isoform>
    <isoform>
        <id>Q9H171-5</id>
        <name>5</name>
        <sequence type="described" ref="VSP_004079 VSP_004080"/>
    </isoform>
    <isoform>
        <id>Q9H171-6</id>
        <name>6</name>
        <sequence type="described" ref="VSP_045405 VSP_045406"/>
    </isoform>
    <isoform>
        <id>Q9H171-7</id>
        <name>7</name>
        <name evidence="15">Delta-exon-2</name>
        <name evidence="15">Deltaexon-2</name>
        <name evidence="16">Delta-Z-alpha</name>
        <name evidence="16">DeltaZalpha</name>
        <sequence type="described" ref="VSP_046081"/>
    </isoform>
    <text>Additional isoforms seem to exist.</text>
</comment>
<comment type="tissue specificity">
    <text evidence="4">Highly expressed in lymphatic tissues including lymph node, leukocytes, tonsil, bone marrow and spleen (PubMed:11842111). Expressed to a lesser extent in thymus, lung and liver (PubMed:11842111).</text>
</comment>
<comment type="domain">
    <text evidence="1">The Z-binding domains recognize and bind left-handed double-stranded Z-RNA structures, but not A-RNA, the right-handed double-stranded RNAs that are structurally very different from Z-RNAs. The second Z-binding domain (also named Zalpha2) acts as a molecular switch regulating pyroptosis, necroptosis and apoptosis (PANoptosis). The second Z-binding domain is essential for sensing influenza A virus (IAV) Z-RNAs.</text>
</comment>
<comment type="domain">
    <text evidence="9">(Microbial infection) The RIP homotypic interaction motif (RHIM) mediates interaction with the RHIM motif of the herpes simplex virus 1/HHV-1 protein RIR1/ICP6 to form hetero-amyloid structures.</text>
</comment>
<comment type="PTM">
    <text evidence="1">Phosphorylated.</text>
</comment>
<comment type="online information" name="Protein Spotlight">
    <link uri="https://www.proteinspotlight.org/back_issues/227/"/>
    <text>Spotting patterns - Issue 227 of August 2020</text>
</comment>
<sequence length="429" mass="46343">MAQAPADPGREGHLEQRILQVLTEAGSPVKLAQLVKECQAPKRELNQVLYRMKKELKVSLTSPATWCLGGTDPEGEGPAELALSSPAERPQQHAATIPETPGPQFSQQREEDIYRFLKDNGPQRALVIAQALGMRTAKDVNRDLYRMKSRHLLDMDEQSKAWTIYRPEDSGRRAKSASIIYQHNPINMICQNGPNSWISIANSEAIQIGHGNIITRQTVSREDGSAGPRHLPSMAPGDSSTWGTLVDPWGPQDIHMEQSILRRVQLGHSNEMRLHGVPSEGPAHIPPGSPPVSATAAGPEASFEARIPSPGTHPEGEAAQRIHMKSCFLEDATIGNSNKMSISPGVAGPGGVAGSGEGEPGEDAGRRPADTQSRSHFPRDIGQPITPSHSKLTPKLETMTLGNRSHKAAEGSHYVDEASHEGSWWGGGI</sequence>
<evidence type="ECO:0000250" key="1">
    <source>
        <dbReference type="UniProtKB" id="Q9QY24"/>
    </source>
</evidence>
<evidence type="ECO:0000255" key="2">
    <source>
        <dbReference type="PROSITE-ProRule" id="PRU00073"/>
    </source>
</evidence>
<evidence type="ECO:0000256" key="3">
    <source>
        <dbReference type="SAM" id="MobiDB-lite"/>
    </source>
</evidence>
<evidence type="ECO:0000269" key="4">
    <source>
    </source>
</evidence>
<evidence type="ECO:0000269" key="5">
    <source>
    </source>
</evidence>
<evidence type="ECO:0000269" key="6">
    <source>
    </source>
</evidence>
<evidence type="ECO:0000269" key="7">
    <source>
    </source>
</evidence>
<evidence type="ECO:0000269" key="8">
    <source>
    </source>
</evidence>
<evidence type="ECO:0000269" key="9">
    <source>
    </source>
</evidence>
<evidence type="ECO:0000269" key="10">
    <source ref="2"/>
</evidence>
<evidence type="ECO:0000269" key="11">
    <source ref="5"/>
</evidence>
<evidence type="ECO:0000303" key="12">
    <source>
    </source>
</evidence>
<evidence type="ECO:0000303" key="13">
    <source>
    </source>
</evidence>
<evidence type="ECO:0000303" key="14">
    <source>
    </source>
</evidence>
<evidence type="ECO:0000303" key="15">
    <source>
    </source>
</evidence>
<evidence type="ECO:0000303" key="16">
    <source>
    </source>
</evidence>
<evidence type="ECO:0000303" key="17">
    <source>
    </source>
</evidence>
<evidence type="ECO:0000303" key="18">
    <source ref="2"/>
</evidence>
<evidence type="ECO:0000305" key="19"/>
<evidence type="ECO:0000305" key="20">
    <source>
    </source>
</evidence>
<evidence type="ECO:0000312" key="21">
    <source>
        <dbReference type="HGNC" id="HGNC:16176"/>
    </source>
</evidence>
<evidence type="ECO:0007744" key="22">
    <source>
        <dbReference type="PDB" id="2L4M"/>
    </source>
</evidence>
<evidence type="ECO:0007744" key="23">
    <source>
        <dbReference type="PDB" id="2LNB"/>
    </source>
</evidence>
<evidence type="ECO:0007744" key="24">
    <source>
        <dbReference type="PDB" id="3EYI"/>
    </source>
</evidence>
<evidence type="ECO:0007829" key="25">
    <source>
        <dbReference type="PDB" id="2LNB"/>
    </source>
</evidence>
<evidence type="ECO:0007829" key="26">
    <source>
        <dbReference type="PDB" id="3EYI"/>
    </source>
</evidence>